<name>MAD1_KLULA</name>
<reference key="1">
    <citation type="journal article" date="2004" name="Nature">
        <title>Genome evolution in yeasts.</title>
        <authorList>
            <person name="Dujon B."/>
            <person name="Sherman D."/>
            <person name="Fischer G."/>
            <person name="Durrens P."/>
            <person name="Casaregola S."/>
            <person name="Lafontaine I."/>
            <person name="de Montigny J."/>
            <person name="Marck C."/>
            <person name="Neuveglise C."/>
            <person name="Talla E."/>
            <person name="Goffard N."/>
            <person name="Frangeul L."/>
            <person name="Aigle M."/>
            <person name="Anthouard V."/>
            <person name="Babour A."/>
            <person name="Barbe V."/>
            <person name="Barnay S."/>
            <person name="Blanchin S."/>
            <person name="Beckerich J.-M."/>
            <person name="Beyne E."/>
            <person name="Bleykasten C."/>
            <person name="Boisrame A."/>
            <person name="Boyer J."/>
            <person name="Cattolico L."/>
            <person name="Confanioleri F."/>
            <person name="de Daruvar A."/>
            <person name="Despons L."/>
            <person name="Fabre E."/>
            <person name="Fairhead C."/>
            <person name="Ferry-Dumazet H."/>
            <person name="Groppi A."/>
            <person name="Hantraye F."/>
            <person name="Hennequin C."/>
            <person name="Jauniaux N."/>
            <person name="Joyet P."/>
            <person name="Kachouri R."/>
            <person name="Kerrest A."/>
            <person name="Koszul R."/>
            <person name="Lemaire M."/>
            <person name="Lesur I."/>
            <person name="Ma L."/>
            <person name="Muller H."/>
            <person name="Nicaud J.-M."/>
            <person name="Nikolski M."/>
            <person name="Oztas S."/>
            <person name="Ozier-Kalogeropoulos O."/>
            <person name="Pellenz S."/>
            <person name="Potier S."/>
            <person name="Richard G.-F."/>
            <person name="Straub M.-L."/>
            <person name="Suleau A."/>
            <person name="Swennen D."/>
            <person name="Tekaia F."/>
            <person name="Wesolowski-Louvel M."/>
            <person name="Westhof E."/>
            <person name="Wirth B."/>
            <person name="Zeniou-Meyer M."/>
            <person name="Zivanovic Y."/>
            <person name="Bolotin-Fukuhara M."/>
            <person name="Thierry A."/>
            <person name="Bouchier C."/>
            <person name="Caudron B."/>
            <person name="Scarpelli C."/>
            <person name="Gaillardin C."/>
            <person name="Weissenbach J."/>
            <person name="Wincker P."/>
            <person name="Souciet J.-L."/>
        </authorList>
    </citation>
    <scope>NUCLEOTIDE SEQUENCE [LARGE SCALE GENOMIC DNA]</scope>
    <source>
        <strain>ATCC 8585 / CBS 2359 / DSM 70799 / NBRC 1267 / NRRL Y-1140 / WM37</strain>
    </source>
</reference>
<sequence>MSLTPQIKEKPLESLDADQLRRRVLTLQYKYTTLQNEYEISKLSSERETYSLQNKYDKSMNELENALKDTKILYEENIKLKEELKSKDALPKEDEKIITTLRTQVVSLKNEVNLKEQRIVELAHKLSSKQNEVTNAIESMKLEIEGSGNILHQHETQINKHVEEIRYLQQELKEKENLISELRSVQTSASHRNNSTEELQDLAVLNKTLKEQLNYAKELEDMNLKQATELKKLRQNNDVQSLLKKENELLQSKLDQLNSLQKKFESLEMENISLQEKITQWGIVRLDGKFKNPNDVITELNMLQRENTFLLDTNSKLQIDFNQMSMLNDEMAIERNQLLDLNKDYETSILNLKRLNHELEQQKLLSFEECKLLRQQLEEFEEQDDKKKTPGDQVNASNIIEGYKNQTEDLTNELKRLNEELSKTDDKIQKRRKITNDLGISYSQRLNELILENKKLERLLSATKNHANILEQKILDLTSLKEKKVRILQLRDNPLLKEHYIRKEKLALLEKENSDLLSGIETDAIPRSVYDRIKHDMKLLEKEIFSANKKTTRLKEVFNKKSLEFIEAVNSLLGFKLEFLAHGKVKLVSCYQPNKYIIADLQSNTLKSDLDKVIPEWETLFQLYVIEKGELPAFLSQVKLRLWELSQP</sequence>
<evidence type="ECO:0000250" key="1"/>
<evidence type="ECO:0000255" key="2"/>
<evidence type="ECO:0000305" key="3"/>
<proteinExistence type="inferred from homology"/>
<organism>
    <name type="scientific">Kluyveromyces lactis (strain ATCC 8585 / CBS 2359 / DSM 70799 / NBRC 1267 / NRRL Y-1140 / WM37)</name>
    <name type="common">Yeast</name>
    <name type="synonym">Candida sphaerica</name>
    <dbReference type="NCBI Taxonomy" id="284590"/>
    <lineage>
        <taxon>Eukaryota</taxon>
        <taxon>Fungi</taxon>
        <taxon>Dikarya</taxon>
        <taxon>Ascomycota</taxon>
        <taxon>Saccharomycotina</taxon>
        <taxon>Saccharomycetes</taxon>
        <taxon>Saccharomycetales</taxon>
        <taxon>Saccharomycetaceae</taxon>
        <taxon>Kluyveromyces</taxon>
    </lineage>
</organism>
<comment type="function">
    <text>Central component of the spindle assembly checkpoint.</text>
</comment>
<comment type="subcellular location">
    <subcellularLocation>
        <location evidence="1">Nucleus</location>
    </subcellularLocation>
</comment>
<comment type="similarity">
    <text evidence="3">Belongs to the MAD1 family.</text>
</comment>
<keyword id="KW-0131">Cell cycle</keyword>
<keyword id="KW-0132">Cell division</keyword>
<keyword id="KW-0175">Coiled coil</keyword>
<keyword id="KW-0498">Mitosis</keyword>
<keyword id="KW-0539">Nucleus</keyword>
<keyword id="KW-1185">Reference proteome</keyword>
<dbReference type="EMBL" id="CR382125">
    <property type="protein sequence ID" value="CAG99904.1"/>
    <property type="molecule type" value="Genomic_DNA"/>
</dbReference>
<dbReference type="RefSeq" id="XP_454817.1">
    <property type="nucleotide sequence ID" value="XM_454817.1"/>
</dbReference>
<dbReference type="SMR" id="Q6CMM2"/>
<dbReference type="FunCoup" id="Q6CMM2">
    <property type="interactions" value="363"/>
</dbReference>
<dbReference type="STRING" id="284590.Q6CMM2"/>
<dbReference type="PaxDb" id="284590-Q6CMM2"/>
<dbReference type="KEGG" id="kla:KLLA0_E19141g"/>
<dbReference type="eggNOG" id="KOG4593">
    <property type="taxonomic scope" value="Eukaryota"/>
</dbReference>
<dbReference type="HOGENOM" id="CLU_026595_0_0_1"/>
<dbReference type="InParanoid" id="Q6CMM2"/>
<dbReference type="OMA" id="FGFIIEF"/>
<dbReference type="Proteomes" id="UP000000598">
    <property type="component" value="Chromosome E"/>
</dbReference>
<dbReference type="GO" id="GO:0000776">
    <property type="term" value="C:kinetochore"/>
    <property type="evidence" value="ECO:0007669"/>
    <property type="project" value="TreeGrafter"/>
</dbReference>
<dbReference type="GO" id="GO:0072686">
    <property type="term" value="C:mitotic spindle"/>
    <property type="evidence" value="ECO:0007669"/>
    <property type="project" value="TreeGrafter"/>
</dbReference>
<dbReference type="GO" id="GO:0005635">
    <property type="term" value="C:nuclear envelope"/>
    <property type="evidence" value="ECO:0007669"/>
    <property type="project" value="TreeGrafter"/>
</dbReference>
<dbReference type="GO" id="GO:0051315">
    <property type="term" value="P:attachment of mitotic spindle microtubules to kinetochore"/>
    <property type="evidence" value="ECO:0007669"/>
    <property type="project" value="TreeGrafter"/>
</dbReference>
<dbReference type="GO" id="GO:0051301">
    <property type="term" value="P:cell division"/>
    <property type="evidence" value="ECO:0007669"/>
    <property type="project" value="UniProtKB-KW"/>
</dbReference>
<dbReference type="GO" id="GO:0007094">
    <property type="term" value="P:mitotic spindle assembly checkpoint signaling"/>
    <property type="evidence" value="ECO:0007669"/>
    <property type="project" value="InterPro"/>
</dbReference>
<dbReference type="Gene3D" id="1.20.5.170">
    <property type="match status" value="1"/>
</dbReference>
<dbReference type="Gene3D" id="3.30.457.60">
    <property type="match status" value="1"/>
</dbReference>
<dbReference type="InterPro" id="IPR008672">
    <property type="entry name" value="Mad1"/>
</dbReference>
<dbReference type="PANTHER" id="PTHR23168:SF0">
    <property type="entry name" value="MITOTIC SPINDLE ASSEMBLY CHECKPOINT PROTEIN MAD1"/>
    <property type="match status" value="1"/>
</dbReference>
<dbReference type="PANTHER" id="PTHR23168">
    <property type="entry name" value="MITOTIC SPINDLE ASSEMBLY CHECKPOINT PROTEIN MAD1 MITOTIC ARREST DEFICIENT-LIKE PROTEIN 1"/>
    <property type="match status" value="1"/>
</dbReference>
<dbReference type="Pfam" id="PF05557">
    <property type="entry name" value="MAD"/>
    <property type="match status" value="1"/>
</dbReference>
<gene>
    <name type="primary">MAD1</name>
    <name type="ordered locus">KLLA0E19239g</name>
</gene>
<feature type="chain" id="PRO_0000213795" description="Spindle assembly checkpoint component MAD1">
    <location>
        <begin position="1"/>
        <end position="648"/>
    </location>
</feature>
<feature type="coiled-coil region" evidence="2">
    <location>
        <begin position="19"/>
        <end position="283"/>
    </location>
</feature>
<feature type="coiled-coil region" evidence="2">
    <location>
        <begin position="322"/>
        <end position="483"/>
    </location>
</feature>
<protein>
    <recommendedName>
        <fullName>Spindle assembly checkpoint component MAD1</fullName>
    </recommendedName>
    <alternativeName>
        <fullName>Mitotic arrest deficient protein 1</fullName>
    </alternativeName>
</protein>
<accession>Q6CMM2</accession>